<proteinExistence type="evidence at transcript level"/>
<evidence type="ECO:0000250" key="1"/>
<evidence type="ECO:0000255" key="2">
    <source>
        <dbReference type="PROSITE-ProRule" id="PRU01319"/>
    </source>
</evidence>
<evidence type="ECO:0000305" key="3"/>
<gene>
    <name type="ordered locus">At2g25100</name>
    <name type="ORF">F13D4.60</name>
</gene>
<name>RNH2A_ARATH</name>
<sequence>MESECLTPEWASQPCLMGIDEAGRGPVLGPMVYGCMYCPISYQSSLASLHFADSKTLKEEKREELYESLKLDKSLGWAVDVIDPRELSAKMLAKNKTNLNEISHNSAMGLIKRVLDMGVLLTEAYLDTVGDPDKYRIKLSERFPSIKFVVSKKADSLFPIVSGASIVAKVTRDRALKEWLVEETGEDINRNFGSGYPGDPETKAWLVQHKHSVFGFPSLVRFSWGTCTTHLKGEVEVAWEADENEESGNGSSSKRQAKLSSFGFKTCEKRSEEIESSGKGRCKFLQARKIQQLTQF</sequence>
<comment type="function">
    <text evidence="1">Catalytic subunit of RNase HII, an endonuclease that specifically degrades the RNA of RNA:DNA hybrids. Participates in DNA replication, possibly by mediating the removal of lagging-strand Okazaki fragment RNA primers during DNA replication. Mediates the excision of single ribonucleotides from DNA:RNA duplexes (By similarity).</text>
</comment>
<comment type="catalytic activity">
    <reaction>
        <text>Endonucleolytic cleavage to 5'-phosphomonoester.</text>
        <dbReference type="EC" id="3.1.26.4"/>
    </reaction>
</comment>
<comment type="cofactor">
    <cofactor evidence="1">
        <name>Mn(2+)</name>
        <dbReference type="ChEBI" id="CHEBI:29035"/>
    </cofactor>
    <cofactor evidence="1">
        <name>Mg(2+)</name>
        <dbReference type="ChEBI" id="CHEBI:18420"/>
    </cofactor>
    <text evidence="1">Manganese or magnesium. Binds 1 divalent metal ion per monomer in the absence of substrate. May bind a second metal ion after substrate binding.</text>
</comment>
<comment type="alternative products">
    <event type="alternative splicing"/>
    <isoform>
        <id>Q9SEZ6-1</id>
        <name>1</name>
        <sequence type="displayed"/>
    </isoform>
    <text>A number of isoforms are produced. According to EST sequences.</text>
</comment>
<comment type="similarity">
    <text evidence="3">Belongs to the RNase HII family. Eukaryotic subfamily.</text>
</comment>
<comment type="sequence caution" evidence="3">
    <conflict type="erroneous initiation">
        <sequence resource="EMBL-CDS" id="AAM65508"/>
    </conflict>
</comment>
<organism>
    <name type="scientific">Arabidopsis thaliana</name>
    <name type="common">Mouse-ear cress</name>
    <dbReference type="NCBI Taxonomy" id="3702"/>
    <lineage>
        <taxon>Eukaryota</taxon>
        <taxon>Viridiplantae</taxon>
        <taxon>Streptophyta</taxon>
        <taxon>Embryophyta</taxon>
        <taxon>Tracheophyta</taxon>
        <taxon>Spermatophyta</taxon>
        <taxon>Magnoliopsida</taxon>
        <taxon>eudicotyledons</taxon>
        <taxon>Gunneridae</taxon>
        <taxon>Pentapetalae</taxon>
        <taxon>rosids</taxon>
        <taxon>malvids</taxon>
        <taxon>Brassicales</taxon>
        <taxon>Brassicaceae</taxon>
        <taxon>Camelineae</taxon>
        <taxon>Arabidopsis</taxon>
    </lineage>
</organism>
<protein>
    <recommendedName>
        <fullName>Ribonuclease H2 subunit A</fullName>
        <shortName>RNase H2 subunit A</shortName>
        <ecNumber>3.1.26.4</ecNumber>
    </recommendedName>
    <alternativeName>
        <fullName>Ribonuclease HI large subunit</fullName>
        <shortName>RNase HI large subunit</shortName>
    </alternativeName>
    <alternativeName>
        <fullName>Ribonuclease HI subunit A</fullName>
    </alternativeName>
</protein>
<feature type="chain" id="PRO_0000111715" description="Ribonuclease H2 subunit A">
    <location>
        <begin position="1"/>
        <end position="296"/>
    </location>
</feature>
<feature type="domain" description="RNase H type-2" evidence="2">
    <location>
        <begin position="14"/>
        <end position="236"/>
    </location>
</feature>
<feature type="binding site" evidence="1">
    <location>
        <position position="20"/>
    </location>
    <ligand>
        <name>a divalent metal cation</name>
        <dbReference type="ChEBI" id="CHEBI:60240"/>
    </ligand>
</feature>
<feature type="binding site" evidence="1">
    <location>
        <position position="21"/>
    </location>
    <ligand>
        <name>a divalent metal cation</name>
        <dbReference type="ChEBI" id="CHEBI:60240"/>
    </ligand>
</feature>
<feature type="binding site" evidence="1">
    <location>
        <position position="127"/>
    </location>
    <ligand>
        <name>a divalent metal cation</name>
        <dbReference type="ChEBI" id="CHEBI:60240"/>
    </ligand>
</feature>
<feature type="sequence conflict" description="In Ref. 5; AAM65508." evidence="3" ref="5">
    <original>E</original>
    <variation>D</variation>
    <location>
        <position position="64"/>
    </location>
</feature>
<feature type="sequence conflict" description="In Ref. 5; AAM65508." evidence="3" ref="5">
    <original>R</original>
    <variation>K</variation>
    <location>
        <position position="136"/>
    </location>
</feature>
<reference key="1">
    <citation type="journal article" date="1999" name="Nature">
        <title>Sequence and analysis of chromosome 2 of the plant Arabidopsis thaliana.</title>
        <authorList>
            <person name="Lin X."/>
            <person name="Kaul S."/>
            <person name="Rounsley S.D."/>
            <person name="Shea T.P."/>
            <person name="Benito M.-I."/>
            <person name="Town C.D."/>
            <person name="Fujii C.Y."/>
            <person name="Mason T.M."/>
            <person name="Bowman C.L."/>
            <person name="Barnstead M.E."/>
            <person name="Feldblyum T.V."/>
            <person name="Buell C.R."/>
            <person name="Ketchum K.A."/>
            <person name="Lee J.J."/>
            <person name="Ronning C.M."/>
            <person name="Koo H.L."/>
            <person name="Moffat K.S."/>
            <person name="Cronin L.A."/>
            <person name="Shen M."/>
            <person name="Pai G."/>
            <person name="Van Aken S."/>
            <person name="Umayam L."/>
            <person name="Tallon L.J."/>
            <person name="Gill J.E."/>
            <person name="Adams M.D."/>
            <person name="Carrera A.J."/>
            <person name="Creasy T.H."/>
            <person name="Goodman H.M."/>
            <person name="Somerville C.R."/>
            <person name="Copenhaver G.P."/>
            <person name="Preuss D."/>
            <person name="Nierman W.C."/>
            <person name="White O."/>
            <person name="Eisen J.A."/>
            <person name="Salzberg S.L."/>
            <person name="Fraser C.M."/>
            <person name="Venter J.C."/>
        </authorList>
    </citation>
    <scope>NUCLEOTIDE SEQUENCE [LARGE SCALE GENOMIC DNA]</scope>
    <source>
        <strain>cv. Columbia</strain>
    </source>
</reference>
<reference key="2">
    <citation type="journal article" date="2017" name="Plant J.">
        <title>Araport11: a complete reannotation of the Arabidopsis thaliana reference genome.</title>
        <authorList>
            <person name="Cheng C.Y."/>
            <person name="Krishnakumar V."/>
            <person name="Chan A.P."/>
            <person name="Thibaud-Nissen F."/>
            <person name="Schobel S."/>
            <person name="Town C.D."/>
        </authorList>
    </citation>
    <scope>GENOME REANNOTATION</scope>
    <source>
        <strain>cv. Columbia</strain>
    </source>
</reference>
<reference key="3">
    <citation type="journal article" date="2002" name="Science">
        <title>Functional annotation of a full-length Arabidopsis cDNA collection.</title>
        <authorList>
            <person name="Seki M."/>
            <person name="Narusaka M."/>
            <person name="Kamiya A."/>
            <person name="Ishida J."/>
            <person name="Satou M."/>
            <person name="Sakurai T."/>
            <person name="Nakajima M."/>
            <person name="Enju A."/>
            <person name="Akiyama K."/>
            <person name="Oono Y."/>
            <person name="Muramatsu M."/>
            <person name="Hayashizaki Y."/>
            <person name="Kawai J."/>
            <person name="Carninci P."/>
            <person name="Itoh M."/>
            <person name="Ishii Y."/>
            <person name="Arakawa T."/>
            <person name="Shibata K."/>
            <person name="Shinagawa A."/>
            <person name="Shinozaki K."/>
        </authorList>
    </citation>
    <scope>NUCLEOTIDE SEQUENCE [LARGE SCALE MRNA]</scope>
    <source>
        <strain>cv. Columbia</strain>
    </source>
</reference>
<reference key="4">
    <citation type="journal article" date="2003" name="Science">
        <title>Empirical analysis of transcriptional activity in the Arabidopsis genome.</title>
        <authorList>
            <person name="Yamada K."/>
            <person name="Lim J."/>
            <person name="Dale J.M."/>
            <person name="Chen H."/>
            <person name="Shinn P."/>
            <person name="Palm C.J."/>
            <person name="Southwick A.M."/>
            <person name="Wu H.C."/>
            <person name="Kim C.J."/>
            <person name="Nguyen M."/>
            <person name="Pham P.K."/>
            <person name="Cheuk R.F."/>
            <person name="Karlin-Newmann G."/>
            <person name="Liu S.X."/>
            <person name="Lam B."/>
            <person name="Sakano H."/>
            <person name="Wu T."/>
            <person name="Yu G."/>
            <person name="Miranda M."/>
            <person name="Quach H.L."/>
            <person name="Tripp M."/>
            <person name="Chang C.H."/>
            <person name="Lee J.M."/>
            <person name="Toriumi M.J."/>
            <person name="Chan M.M."/>
            <person name="Tang C.C."/>
            <person name="Onodera C.S."/>
            <person name="Deng J.M."/>
            <person name="Akiyama K."/>
            <person name="Ansari Y."/>
            <person name="Arakawa T."/>
            <person name="Banh J."/>
            <person name="Banno F."/>
            <person name="Bowser L."/>
            <person name="Brooks S.Y."/>
            <person name="Carninci P."/>
            <person name="Chao Q."/>
            <person name="Choy N."/>
            <person name="Enju A."/>
            <person name="Goldsmith A.D."/>
            <person name="Gurjal M."/>
            <person name="Hansen N.F."/>
            <person name="Hayashizaki Y."/>
            <person name="Johnson-Hopson C."/>
            <person name="Hsuan V.W."/>
            <person name="Iida K."/>
            <person name="Karnes M."/>
            <person name="Khan S."/>
            <person name="Koesema E."/>
            <person name="Ishida J."/>
            <person name="Jiang P.X."/>
            <person name="Jones T."/>
            <person name="Kawai J."/>
            <person name="Kamiya A."/>
            <person name="Meyers C."/>
            <person name="Nakajima M."/>
            <person name="Narusaka M."/>
            <person name="Seki M."/>
            <person name="Sakurai T."/>
            <person name="Satou M."/>
            <person name="Tamse R."/>
            <person name="Vaysberg M."/>
            <person name="Wallender E.K."/>
            <person name="Wong C."/>
            <person name="Yamamura Y."/>
            <person name="Yuan S."/>
            <person name="Shinozaki K."/>
            <person name="Davis R.W."/>
            <person name="Theologis A."/>
            <person name="Ecker J.R."/>
        </authorList>
    </citation>
    <scope>NUCLEOTIDE SEQUENCE [LARGE SCALE MRNA]</scope>
    <source>
        <strain>cv. Columbia</strain>
    </source>
</reference>
<reference key="5">
    <citation type="submission" date="2002-03" db="EMBL/GenBank/DDBJ databases">
        <title>Full-length cDNA from Arabidopsis thaliana.</title>
        <authorList>
            <person name="Brover V.V."/>
            <person name="Troukhan M.E."/>
            <person name="Alexandrov N.A."/>
            <person name="Lu Y.-P."/>
            <person name="Flavell R.B."/>
            <person name="Feldmann K.A."/>
        </authorList>
    </citation>
    <scope>NUCLEOTIDE SEQUENCE [LARGE SCALE MRNA]</scope>
</reference>
<accession>Q9SEZ6</accession>
<accession>Q8GYG9</accession>
<accession>Q8LA95</accession>
<dbReference type="EC" id="3.1.26.4"/>
<dbReference type="EMBL" id="CP002685">
    <property type="protein sequence ID" value="AEC07657.1"/>
    <property type="molecule type" value="Genomic_DNA"/>
</dbReference>
<dbReference type="EMBL" id="AK117633">
    <property type="protein sequence ID" value="BAC42289.1"/>
    <property type="molecule type" value="mRNA"/>
</dbReference>
<dbReference type="EMBL" id="BT005597">
    <property type="protein sequence ID" value="AAO64017.1"/>
    <property type="molecule type" value="mRNA"/>
</dbReference>
<dbReference type="EMBL" id="AY087961">
    <property type="protein sequence ID" value="AAM65508.1"/>
    <property type="status" value="ALT_INIT"/>
    <property type="molecule type" value="mRNA"/>
</dbReference>
<dbReference type="PIR" id="C84644">
    <property type="entry name" value="C84644"/>
</dbReference>
<dbReference type="RefSeq" id="NP_565584.1">
    <molecule id="Q9SEZ6-1"/>
    <property type="nucleotide sequence ID" value="NM_128067.5"/>
</dbReference>
<dbReference type="SMR" id="Q9SEZ6"/>
<dbReference type="FunCoup" id="Q9SEZ6">
    <property type="interactions" value="2736"/>
</dbReference>
<dbReference type="STRING" id="3702.Q9SEZ6"/>
<dbReference type="PaxDb" id="3702-AT2G25100.1"/>
<dbReference type="ProteomicsDB" id="228124">
    <molecule id="Q9SEZ6-1"/>
</dbReference>
<dbReference type="EnsemblPlants" id="AT2G25100.1">
    <molecule id="Q9SEZ6-1"/>
    <property type="protein sequence ID" value="AT2G25100.1"/>
    <property type="gene ID" value="AT2G25100"/>
</dbReference>
<dbReference type="GeneID" id="817048"/>
<dbReference type="Gramene" id="AT2G25100.1">
    <molecule id="Q9SEZ6-1"/>
    <property type="protein sequence ID" value="AT2G25100.1"/>
    <property type="gene ID" value="AT2G25100"/>
</dbReference>
<dbReference type="KEGG" id="ath:AT2G25100"/>
<dbReference type="Araport" id="AT2G25100"/>
<dbReference type="TAIR" id="AT2G25100"/>
<dbReference type="eggNOG" id="KOG2299">
    <property type="taxonomic scope" value="Eukaryota"/>
</dbReference>
<dbReference type="HOGENOM" id="CLU_036532_0_3_1"/>
<dbReference type="InParanoid" id="Q9SEZ6"/>
<dbReference type="OMA" id="REECRFF"/>
<dbReference type="OrthoDB" id="7462577at2759"/>
<dbReference type="PhylomeDB" id="Q9SEZ6"/>
<dbReference type="PRO" id="PR:Q9SEZ6"/>
<dbReference type="Proteomes" id="UP000006548">
    <property type="component" value="Chromosome 2"/>
</dbReference>
<dbReference type="ExpressionAtlas" id="Q9SEZ6">
    <property type="expression patterns" value="baseline and differential"/>
</dbReference>
<dbReference type="GO" id="GO:0046872">
    <property type="term" value="F:metal ion binding"/>
    <property type="evidence" value="ECO:0007669"/>
    <property type="project" value="UniProtKB-KW"/>
</dbReference>
<dbReference type="GO" id="GO:0003723">
    <property type="term" value="F:RNA binding"/>
    <property type="evidence" value="ECO:0007669"/>
    <property type="project" value="InterPro"/>
</dbReference>
<dbReference type="GO" id="GO:0004523">
    <property type="term" value="F:RNA-DNA hybrid ribonuclease activity"/>
    <property type="evidence" value="ECO:0007669"/>
    <property type="project" value="UniProtKB-EC"/>
</dbReference>
<dbReference type="GO" id="GO:0016070">
    <property type="term" value="P:RNA metabolic process"/>
    <property type="evidence" value="ECO:0007669"/>
    <property type="project" value="InterPro"/>
</dbReference>
<dbReference type="CDD" id="cd07181">
    <property type="entry name" value="RNase_HII_eukaryota_like"/>
    <property type="match status" value="1"/>
</dbReference>
<dbReference type="FunFam" id="1.10.10.460:FF:000001">
    <property type="entry name" value="Ribonuclease"/>
    <property type="match status" value="1"/>
</dbReference>
<dbReference type="FunFam" id="3.30.420.10:FF:000016">
    <property type="entry name" value="Ribonuclease"/>
    <property type="match status" value="1"/>
</dbReference>
<dbReference type="Gene3D" id="3.30.420.10">
    <property type="entry name" value="Ribonuclease H-like superfamily/Ribonuclease H"/>
    <property type="match status" value="1"/>
</dbReference>
<dbReference type="Gene3D" id="1.10.10.460">
    <property type="entry name" value="Ribonuclease hii. Domain 2"/>
    <property type="match status" value="1"/>
</dbReference>
<dbReference type="InterPro" id="IPR004649">
    <property type="entry name" value="RNase_H2_suA"/>
</dbReference>
<dbReference type="InterPro" id="IPR001352">
    <property type="entry name" value="RNase_HII/HIII"/>
</dbReference>
<dbReference type="InterPro" id="IPR024567">
    <property type="entry name" value="RNase_HII/HIII_dom"/>
</dbReference>
<dbReference type="InterPro" id="IPR023160">
    <property type="entry name" value="RNase_HII_hlx-loop-hlx_cap_dom"/>
</dbReference>
<dbReference type="InterPro" id="IPR012337">
    <property type="entry name" value="RNaseH-like_sf"/>
</dbReference>
<dbReference type="InterPro" id="IPR036397">
    <property type="entry name" value="RNaseH_sf"/>
</dbReference>
<dbReference type="NCBIfam" id="TIGR00729">
    <property type="entry name" value="ribonuclease HII"/>
    <property type="match status" value="1"/>
</dbReference>
<dbReference type="PANTHER" id="PTHR10954">
    <property type="entry name" value="RIBONUCLEASE H2 SUBUNIT A"/>
    <property type="match status" value="1"/>
</dbReference>
<dbReference type="PANTHER" id="PTHR10954:SF7">
    <property type="entry name" value="RIBONUCLEASE H2 SUBUNIT A"/>
    <property type="match status" value="1"/>
</dbReference>
<dbReference type="Pfam" id="PF01351">
    <property type="entry name" value="RNase_HII"/>
    <property type="match status" value="1"/>
</dbReference>
<dbReference type="SUPFAM" id="SSF53098">
    <property type="entry name" value="Ribonuclease H-like"/>
    <property type="match status" value="1"/>
</dbReference>
<dbReference type="PROSITE" id="PS51975">
    <property type="entry name" value="RNASE_H_2"/>
    <property type="match status" value="1"/>
</dbReference>
<keyword id="KW-0025">Alternative splicing</keyword>
<keyword id="KW-0255">Endonuclease</keyword>
<keyword id="KW-0378">Hydrolase</keyword>
<keyword id="KW-0479">Metal-binding</keyword>
<keyword id="KW-0540">Nuclease</keyword>
<keyword id="KW-1185">Reference proteome</keyword>